<reference key="1">
    <citation type="journal article" date="2006" name="Proc. Natl. Acad. Sci. U.S.A.">
        <title>Evolution of sensory complexity recorded in a myxobacterial genome.</title>
        <authorList>
            <person name="Goldman B.S."/>
            <person name="Nierman W.C."/>
            <person name="Kaiser D."/>
            <person name="Slater S.C."/>
            <person name="Durkin A.S."/>
            <person name="Eisen J.A."/>
            <person name="Ronning C.M."/>
            <person name="Barbazuk W.B."/>
            <person name="Blanchard M."/>
            <person name="Field C."/>
            <person name="Halling C."/>
            <person name="Hinkle G."/>
            <person name="Iartchuk O."/>
            <person name="Kim H.S."/>
            <person name="Mackenzie C."/>
            <person name="Madupu R."/>
            <person name="Miller N."/>
            <person name="Shvartsbeyn A."/>
            <person name="Sullivan S.A."/>
            <person name="Vaudin M."/>
            <person name="Wiegand R."/>
            <person name="Kaplan H.B."/>
        </authorList>
    </citation>
    <scope>NUCLEOTIDE SEQUENCE [LARGE SCALE GENOMIC DNA]</scope>
    <source>
        <strain>DK1622</strain>
    </source>
</reference>
<keyword id="KW-0963">Cytoplasm</keyword>
<keyword id="KW-0378">Hydrolase</keyword>
<keyword id="KW-1185">Reference proteome</keyword>
<keyword id="KW-0694">RNA-binding</keyword>
<keyword id="KW-0820">tRNA-binding</keyword>
<comment type="function">
    <text evidence="1">An aminoacyl-tRNA editing enzyme that deacylates mischarged D-aminoacyl-tRNAs. Also deacylates mischarged glycyl-tRNA(Ala), protecting cells against glycine mischarging by AlaRS. Acts via tRNA-based rather than protein-based catalysis; rejects L-amino acids rather than detecting D-amino acids in the active site. By recycling D-aminoacyl-tRNA to D-amino acids and free tRNA molecules, this enzyme counteracts the toxicity associated with the formation of D-aminoacyl-tRNA entities in vivo and helps enforce protein L-homochirality.</text>
</comment>
<comment type="catalytic activity">
    <reaction evidence="1">
        <text>glycyl-tRNA(Ala) + H2O = tRNA(Ala) + glycine + H(+)</text>
        <dbReference type="Rhea" id="RHEA:53744"/>
        <dbReference type="Rhea" id="RHEA-COMP:9657"/>
        <dbReference type="Rhea" id="RHEA-COMP:13640"/>
        <dbReference type="ChEBI" id="CHEBI:15377"/>
        <dbReference type="ChEBI" id="CHEBI:15378"/>
        <dbReference type="ChEBI" id="CHEBI:57305"/>
        <dbReference type="ChEBI" id="CHEBI:78442"/>
        <dbReference type="ChEBI" id="CHEBI:78522"/>
        <dbReference type="EC" id="3.1.1.96"/>
    </reaction>
</comment>
<comment type="catalytic activity">
    <reaction evidence="1">
        <text>a D-aminoacyl-tRNA + H2O = a tRNA + a D-alpha-amino acid + H(+)</text>
        <dbReference type="Rhea" id="RHEA:13953"/>
        <dbReference type="Rhea" id="RHEA-COMP:10123"/>
        <dbReference type="Rhea" id="RHEA-COMP:10124"/>
        <dbReference type="ChEBI" id="CHEBI:15377"/>
        <dbReference type="ChEBI" id="CHEBI:15378"/>
        <dbReference type="ChEBI" id="CHEBI:59871"/>
        <dbReference type="ChEBI" id="CHEBI:78442"/>
        <dbReference type="ChEBI" id="CHEBI:79333"/>
        <dbReference type="EC" id="3.1.1.96"/>
    </reaction>
</comment>
<comment type="subunit">
    <text evidence="1">Homodimer.</text>
</comment>
<comment type="subcellular location">
    <subcellularLocation>
        <location evidence="1">Cytoplasm</location>
    </subcellularLocation>
</comment>
<comment type="domain">
    <text evidence="1">A Gly-cisPro motif from one monomer fits into the active site of the other monomer to allow specific chiral rejection of L-amino acids.</text>
</comment>
<comment type="similarity">
    <text evidence="1">Belongs to the DTD family.</text>
</comment>
<accession>Q1DDE5</accession>
<feature type="chain" id="PRO_0000259292" description="D-aminoacyl-tRNA deacylase">
    <location>
        <begin position="1"/>
        <end position="153"/>
    </location>
</feature>
<feature type="short sequence motif" description="Gly-cisPro motif, important for rejection of L-amino acids" evidence="1">
    <location>
        <begin position="137"/>
        <end position="138"/>
    </location>
</feature>
<proteinExistence type="inferred from homology"/>
<evidence type="ECO:0000255" key="1">
    <source>
        <dbReference type="HAMAP-Rule" id="MF_00518"/>
    </source>
</evidence>
<sequence>MRAVVQRVLEASVTVEGQRVSDIGPGLLVLLGVGKGDTEADVAWMVEKLATLRIFEDAAGKMNLSLEETSRQLIVVSQFTLYGDARKGRRPSFIDAMEPVSAKALYERTCELLRQRGLSVGTGIFAADMKVALVNDGPVTLLLESPGPAAPKG</sequence>
<name>DTD_MYXXD</name>
<dbReference type="EC" id="3.1.1.96" evidence="1"/>
<dbReference type="EMBL" id="CP000113">
    <property type="protein sequence ID" value="ABF86443.1"/>
    <property type="molecule type" value="Genomic_DNA"/>
</dbReference>
<dbReference type="RefSeq" id="WP_011551188.1">
    <property type="nucleotide sequence ID" value="NC_008095.1"/>
</dbReference>
<dbReference type="SMR" id="Q1DDE5"/>
<dbReference type="STRING" id="246197.MXAN_1068"/>
<dbReference type="EnsemblBacteria" id="ABF86443">
    <property type="protein sequence ID" value="ABF86443"/>
    <property type="gene ID" value="MXAN_1068"/>
</dbReference>
<dbReference type="GeneID" id="41358520"/>
<dbReference type="KEGG" id="mxa:MXAN_1068"/>
<dbReference type="eggNOG" id="COG1490">
    <property type="taxonomic scope" value="Bacteria"/>
</dbReference>
<dbReference type="HOGENOM" id="CLU_076901_1_0_7"/>
<dbReference type="OrthoDB" id="9801395at2"/>
<dbReference type="Proteomes" id="UP000002402">
    <property type="component" value="Chromosome"/>
</dbReference>
<dbReference type="GO" id="GO:0005737">
    <property type="term" value="C:cytoplasm"/>
    <property type="evidence" value="ECO:0007669"/>
    <property type="project" value="UniProtKB-SubCell"/>
</dbReference>
<dbReference type="GO" id="GO:0051500">
    <property type="term" value="F:D-tyrosyl-tRNA(Tyr) deacylase activity"/>
    <property type="evidence" value="ECO:0007669"/>
    <property type="project" value="TreeGrafter"/>
</dbReference>
<dbReference type="GO" id="GO:0106026">
    <property type="term" value="F:Gly-tRNA(Ala) deacylase activity"/>
    <property type="evidence" value="ECO:0007669"/>
    <property type="project" value="UniProtKB-UniRule"/>
</dbReference>
<dbReference type="GO" id="GO:0043908">
    <property type="term" value="F:Ser(Gly)-tRNA(Ala) hydrolase activity"/>
    <property type="evidence" value="ECO:0007669"/>
    <property type="project" value="UniProtKB-UniRule"/>
</dbReference>
<dbReference type="GO" id="GO:0000049">
    <property type="term" value="F:tRNA binding"/>
    <property type="evidence" value="ECO:0007669"/>
    <property type="project" value="UniProtKB-UniRule"/>
</dbReference>
<dbReference type="GO" id="GO:0019478">
    <property type="term" value="P:D-amino acid catabolic process"/>
    <property type="evidence" value="ECO:0007669"/>
    <property type="project" value="UniProtKB-UniRule"/>
</dbReference>
<dbReference type="CDD" id="cd00563">
    <property type="entry name" value="Dtyr_deacylase"/>
    <property type="match status" value="1"/>
</dbReference>
<dbReference type="FunFam" id="3.50.80.10:FF:000001">
    <property type="entry name" value="D-aminoacyl-tRNA deacylase"/>
    <property type="match status" value="1"/>
</dbReference>
<dbReference type="Gene3D" id="3.50.80.10">
    <property type="entry name" value="D-tyrosyl-tRNA(Tyr) deacylase"/>
    <property type="match status" value="1"/>
</dbReference>
<dbReference type="HAMAP" id="MF_00518">
    <property type="entry name" value="Deacylase_Dtd"/>
    <property type="match status" value="1"/>
</dbReference>
<dbReference type="InterPro" id="IPR003732">
    <property type="entry name" value="Daa-tRNA_deacyls_DTD"/>
</dbReference>
<dbReference type="InterPro" id="IPR023509">
    <property type="entry name" value="DTD-like_sf"/>
</dbReference>
<dbReference type="NCBIfam" id="TIGR00256">
    <property type="entry name" value="D-aminoacyl-tRNA deacylase"/>
    <property type="match status" value="1"/>
</dbReference>
<dbReference type="PANTHER" id="PTHR10472:SF5">
    <property type="entry name" value="D-AMINOACYL-TRNA DEACYLASE 1"/>
    <property type="match status" value="1"/>
</dbReference>
<dbReference type="PANTHER" id="PTHR10472">
    <property type="entry name" value="D-TYROSYL-TRNA TYR DEACYLASE"/>
    <property type="match status" value="1"/>
</dbReference>
<dbReference type="Pfam" id="PF02580">
    <property type="entry name" value="Tyr_Deacylase"/>
    <property type="match status" value="1"/>
</dbReference>
<dbReference type="SUPFAM" id="SSF69500">
    <property type="entry name" value="DTD-like"/>
    <property type="match status" value="1"/>
</dbReference>
<protein>
    <recommendedName>
        <fullName evidence="1">D-aminoacyl-tRNA deacylase</fullName>
        <shortName evidence="1">DTD</shortName>
        <ecNumber evidence="1">3.1.1.96</ecNumber>
    </recommendedName>
    <alternativeName>
        <fullName evidence="1">Gly-tRNA(Ala) deacylase</fullName>
    </alternativeName>
</protein>
<gene>
    <name evidence="1" type="primary">dtd</name>
    <name type="ordered locus">MXAN_1068</name>
</gene>
<organism>
    <name type="scientific">Myxococcus xanthus (strain DK1622)</name>
    <dbReference type="NCBI Taxonomy" id="246197"/>
    <lineage>
        <taxon>Bacteria</taxon>
        <taxon>Pseudomonadati</taxon>
        <taxon>Myxococcota</taxon>
        <taxon>Myxococcia</taxon>
        <taxon>Myxococcales</taxon>
        <taxon>Cystobacterineae</taxon>
        <taxon>Myxococcaceae</taxon>
        <taxon>Myxococcus</taxon>
    </lineage>
</organism>